<protein>
    <recommendedName>
        <fullName evidence="1">Dihydroxy-acid dehydratase</fullName>
        <shortName evidence="1">DAD</shortName>
        <ecNumber evidence="1">4.2.1.9</ecNumber>
    </recommendedName>
</protein>
<evidence type="ECO:0000255" key="1">
    <source>
        <dbReference type="HAMAP-Rule" id="MF_00012"/>
    </source>
</evidence>
<accession>Q0ADX6</accession>
<sequence>MPDNRRSQAITKGAKRAPNRAMLRAVGFGDGDFDKPIVGIANGFSTITPCNMGLDTLAKCAEHALKNAGAMPQMFGTITVSDGISMGTEGMKYSLVSREVIADSIETCVQAESMDGVIAIGGCDKNMPGALIALARLNVPSIFVYGGTIKPGHYQGRDLTIVSAFEAVGQHSAHKIDDQELLEVERHACPGAGSCGGMYTANTMSSAIEAMGMSLPHSSTMAAEDEEKRISATRSAEVLVEAIKKQILPRSLITRKSLENAVTVVMAVGGSTNAVLHLLAIAHAAEVDFHIDDFEAIRARVPVLCDLKPSGRYVATDLHRAGGIPQVMKMLLVHGLLHGDCLTISGQTIAEVLKDIPEQPRADQNVIRTWDNPVYEQGHLAILKGNLSPEGAVAKISGVKNPNITGPARVFESEETCMTAILDRKIKPGDVVVIRYEGPRGGPGMREMLSPTSALIGEGLGDSVGLITDGRFSGGTYGMVVGHVAPEAYAGGVIALVEEGDSITIDAHRRLLQLNVSETELERRRAAWQPPAPRYTRGVLAKYAKLVSTASRGAVTD</sequence>
<name>ILVD_NITEC</name>
<keyword id="KW-0001">2Fe-2S</keyword>
<keyword id="KW-0028">Amino-acid biosynthesis</keyword>
<keyword id="KW-0100">Branched-chain amino acid biosynthesis</keyword>
<keyword id="KW-0408">Iron</keyword>
<keyword id="KW-0411">Iron-sulfur</keyword>
<keyword id="KW-0456">Lyase</keyword>
<keyword id="KW-0460">Magnesium</keyword>
<keyword id="KW-0479">Metal-binding</keyword>
<comment type="function">
    <text evidence="1">Functions in the biosynthesis of branched-chain amino acids. Catalyzes the dehydration of (2R,3R)-2,3-dihydroxy-3-methylpentanoate (2,3-dihydroxy-3-methylvalerate) into 2-oxo-3-methylpentanoate (2-oxo-3-methylvalerate) and of (2R)-2,3-dihydroxy-3-methylbutanoate (2,3-dihydroxyisovalerate) into 2-oxo-3-methylbutanoate (2-oxoisovalerate), the penultimate precursor to L-isoleucine and L-valine, respectively.</text>
</comment>
<comment type="catalytic activity">
    <reaction evidence="1">
        <text>(2R)-2,3-dihydroxy-3-methylbutanoate = 3-methyl-2-oxobutanoate + H2O</text>
        <dbReference type="Rhea" id="RHEA:24809"/>
        <dbReference type="ChEBI" id="CHEBI:11851"/>
        <dbReference type="ChEBI" id="CHEBI:15377"/>
        <dbReference type="ChEBI" id="CHEBI:49072"/>
        <dbReference type="EC" id="4.2.1.9"/>
    </reaction>
    <physiologicalReaction direction="left-to-right" evidence="1">
        <dbReference type="Rhea" id="RHEA:24810"/>
    </physiologicalReaction>
</comment>
<comment type="catalytic activity">
    <reaction evidence="1">
        <text>(2R,3R)-2,3-dihydroxy-3-methylpentanoate = (S)-3-methyl-2-oxopentanoate + H2O</text>
        <dbReference type="Rhea" id="RHEA:27694"/>
        <dbReference type="ChEBI" id="CHEBI:15377"/>
        <dbReference type="ChEBI" id="CHEBI:35146"/>
        <dbReference type="ChEBI" id="CHEBI:49258"/>
        <dbReference type="EC" id="4.2.1.9"/>
    </reaction>
    <physiologicalReaction direction="left-to-right" evidence="1">
        <dbReference type="Rhea" id="RHEA:27695"/>
    </physiologicalReaction>
</comment>
<comment type="cofactor">
    <cofactor evidence="1">
        <name>[2Fe-2S] cluster</name>
        <dbReference type="ChEBI" id="CHEBI:190135"/>
    </cofactor>
    <text evidence="1">Binds 1 [2Fe-2S] cluster per subunit. This cluster acts as a Lewis acid cofactor.</text>
</comment>
<comment type="cofactor">
    <cofactor evidence="1">
        <name>Mg(2+)</name>
        <dbReference type="ChEBI" id="CHEBI:18420"/>
    </cofactor>
</comment>
<comment type="pathway">
    <text evidence="1">Amino-acid biosynthesis; L-isoleucine biosynthesis; L-isoleucine from 2-oxobutanoate: step 3/4.</text>
</comment>
<comment type="pathway">
    <text evidence="1">Amino-acid biosynthesis; L-valine biosynthesis; L-valine from pyruvate: step 3/4.</text>
</comment>
<comment type="subunit">
    <text evidence="1">Homodimer.</text>
</comment>
<comment type="similarity">
    <text evidence="1">Belongs to the IlvD/Edd family.</text>
</comment>
<gene>
    <name evidence="1" type="primary">ilvD</name>
    <name type="ordered locus">Neut_2238</name>
</gene>
<organism>
    <name type="scientific">Nitrosomonas eutropha (strain DSM 101675 / C91 / Nm57)</name>
    <dbReference type="NCBI Taxonomy" id="335283"/>
    <lineage>
        <taxon>Bacteria</taxon>
        <taxon>Pseudomonadati</taxon>
        <taxon>Pseudomonadota</taxon>
        <taxon>Betaproteobacteria</taxon>
        <taxon>Nitrosomonadales</taxon>
        <taxon>Nitrosomonadaceae</taxon>
        <taxon>Nitrosomonas</taxon>
    </lineage>
</organism>
<feature type="chain" id="PRO_1000001017" description="Dihydroxy-acid dehydratase">
    <location>
        <begin position="1"/>
        <end position="557"/>
    </location>
</feature>
<feature type="active site" description="Proton acceptor" evidence="1">
    <location>
        <position position="473"/>
    </location>
</feature>
<feature type="binding site" evidence="1">
    <location>
        <position position="50"/>
    </location>
    <ligand>
        <name>[2Fe-2S] cluster</name>
        <dbReference type="ChEBI" id="CHEBI:190135"/>
    </ligand>
</feature>
<feature type="binding site" evidence="1">
    <location>
        <position position="82"/>
    </location>
    <ligand>
        <name>Mg(2+)</name>
        <dbReference type="ChEBI" id="CHEBI:18420"/>
    </ligand>
</feature>
<feature type="binding site" evidence="1">
    <location>
        <position position="123"/>
    </location>
    <ligand>
        <name>[2Fe-2S] cluster</name>
        <dbReference type="ChEBI" id="CHEBI:190135"/>
    </ligand>
</feature>
<feature type="binding site" evidence="1">
    <location>
        <position position="124"/>
    </location>
    <ligand>
        <name>Mg(2+)</name>
        <dbReference type="ChEBI" id="CHEBI:18420"/>
    </ligand>
</feature>
<feature type="binding site" description="via carbamate group" evidence="1">
    <location>
        <position position="125"/>
    </location>
    <ligand>
        <name>Mg(2+)</name>
        <dbReference type="ChEBI" id="CHEBI:18420"/>
    </ligand>
</feature>
<feature type="binding site" evidence="1">
    <location>
        <position position="195"/>
    </location>
    <ligand>
        <name>[2Fe-2S] cluster</name>
        <dbReference type="ChEBI" id="CHEBI:190135"/>
    </ligand>
</feature>
<feature type="binding site" evidence="1">
    <location>
        <position position="447"/>
    </location>
    <ligand>
        <name>Mg(2+)</name>
        <dbReference type="ChEBI" id="CHEBI:18420"/>
    </ligand>
</feature>
<feature type="modified residue" description="N6-carboxylysine" evidence="1">
    <location>
        <position position="125"/>
    </location>
</feature>
<dbReference type="EC" id="4.2.1.9" evidence="1"/>
<dbReference type="EMBL" id="CP000450">
    <property type="protein sequence ID" value="ABI60456.1"/>
    <property type="molecule type" value="Genomic_DNA"/>
</dbReference>
<dbReference type="RefSeq" id="WP_011635247.1">
    <property type="nucleotide sequence ID" value="NC_008344.1"/>
</dbReference>
<dbReference type="SMR" id="Q0ADX6"/>
<dbReference type="STRING" id="335283.Neut_2238"/>
<dbReference type="KEGG" id="net:Neut_2238"/>
<dbReference type="eggNOG" id="COG0129">
    <property type="taxonomic scope" value="Bacteria"/>
</dbReference>
<dbReference type="HOGENOM" id="CLU_014271_4_2_4"/>
<dbReference type="OrthoDB" id="9807077at2"/>
<dbReference type="UniPathway" id="UPA00047">
    <property type="reaction ID" value="UER00057"/>
</dbReference>
<dbReference type="UniPathway" id="UPA00049">
    <property type="reaction ID" value="UER00061"/>
</dbReference>
<dbReference type="Proteomes" id="UP000001966">
    <property type="component" value="Chromosome"/>
</dbReference>
<dbReference type="GO" id="GO:0051537">
    <property type="term" value="F:2 iron, 2 sulfur cluster binding"/>
    <property type="evidence" value="ECO:0007669"/>
    <property type="project" value="UniProtKB-UniRule"/>
</dbReference>
<dbReference type="GO" id="GO:0004160">
    <property type="term" value="F:dihydroxy-acid dehydratase activity"/>
    <property type="evidence" value="ECO:0007669"/>
    <property type="project" value="UniProtKB-UniRule"/>
</dbReference>
<dbReference type="GO" id="GO:0000287">
    <property type="term" value="F:magnesium ion binding"/>
    <property type="evidence" value="ECO:0007669"/>
    <property type="project" value="UniProtKB-UniRule"/>
</dbReference>
<dbReference type="GO" id="GO:0009097">
    <property type="term" value="P:isoleucine biosynthetic process"/>
    <property type="evidence" value="ECO:0007669"/>
    <property type="project" value="UniProtKB-UniRule"/>
</dbReference>
<dbReference type="GO" id="GO:0009099">
    <property type="term" value="P:L-valine biosynthetic process"/>
    <property type="evidence" value="ECO:0007669"/>
    <property type="project" value="UniProtKB-UniRule"/>
</dbReference>
<dbReference type="FunFam" id="3.50.30.80:FF:000001">
    <property type="entry name" value="Dihydroxy-acid dehydratase"/>
    <property type="match status" value="1"/>
</dbReference>
<dbReference type="Gene3D" id="3.50.30.80">
    <property type="entry name" value="IlvD/EDD C-terminal domain-like"/>
    <property type="match status" value="1"/>
</dbReference>
<dbReference type="HAMAP" id="MF_00012">
    <property type="entry name" value="IlvD"/>
    <property type="match status" value="1"/>
</dbReference>
<dbReference type="InterPro" id="IPR050165">
    <property type="entry name" value="DHAD_IlvD/Edd"/>
</dbReference>
<dbReference type="InterPro" id="IPR042096">
    <property type="entry name" value="Dihydro-acid_dehy_C"/>
</dbReference>
<dbReference type="InterPro" id="IPR004404">
    <property type="entry name" value="DihydroxyA_deHydtase"/>
</dbReference>
<dbReference type="InterPro" id="IPR020558">
    <property type="entry name" value="DiOHA_6PGluconate_deHydtase_CS"/>
</dbReference>
<dbReference type="InterPro" id="IPR056740">
    <property type="entry name" value="ILV_EDD_C"/>
</dbReference>
<dbReference type="InterPro" id="IPR000581">
    <property type="entry name" value="ILV_EDD_N"/>
</dbReference>
<dbReference type="InterPro" id="IPR037237">
    <property type="entry name" value="IlvD/EDD_N"/>
</dbReference>
<dbReference type="NCBIfam" id="TIGR00110">
    <property type="entry name" value="ilvD"/>
    <property type="match status" value="1"/>
</dbReference>
<dbReference type="NCBIfam" id="NF002068">
    <property type="entry name" value="PRK00911.1"/>
    <property type="match status" value="1"/>
</dbReference>
<dbReference type="PANTHER" id="PTHR21000">
    <property type="entry name" value="DIHYDROXY-ACID DEHYDRATASE DAD"/>
    <property type="match status" value="1"/>
</dbReference>
<dbReference type="PANTHER" id="PTHR21000:SF5">
    <property type="entry name" value="DIHYDROXY-ACID DEHYDRATASE, MITOCHONDRIAL"/>
    <property type="match status" value="1"/>
</dbReference>
<dbReference type="Pfam" id="PF24877">
    <property type="entry name" value="ILV_EDD_C"/>
    <property type="match status" value="1"/>
</dbReference>
<dbReference type="Pfam" id="PF00920">
    <property type="entry name" value="ILVD_EDD_N"/>
    <property type="match status" value="1"/>
</dbReference>
<dbReference type="SUPFAM" id="SSF143975">
    <property type="entry name" value="IlvD/EDD N-terminal domain-like"/>
    <property type="match status" value="1"/>
</dbReference>
<dbReference type="SUPFAM" id="SSF52016">
    <property type="entry name" value="LeuD/IlvD-like"/>
    <property type="match status" value="1"/>
</dbReference>
<dbReference type="PROSITE" id="PS00886">
    <property type="entry name" value="ILVD_EDD_1"/>
    <property type="match status" value="1"/>
</dbReference>
<dbReference type="PROSITE" id="PS00887">
    <property type="entry name" value="ILVD_EDD_2"/>
    <property type="match status" value="1"/>
</dbReference>
<reference key="1">
    <citation type="journal article" date="2007" name="Environ. Microbiol.">
        <title>Whole-genome analysis of the ammonia-oxidizing bacterium, Nitrosomonas eutropha C91: implications for niche adaptation.</title>
        <authorList>
            <person name="Stein L.Y."/>
            <person name="Arp D.J."/>
            <person name="Berube P.M."/>
            <person name="Chain P.S."/>
            <person name="Hauser L."/>
            <person name="Jetten M.S."/>
            <person name="Klotz M.G."/>
            <person name="Larimer F.W."/>
            <person name="Norton J.M."/>
            <person name="Op den Camp H.J.M."/>
            <person name="Shin M."/>
            <person name="Wei X."/>
        </authorList>
    </citation>
    <scope>NUCLEOTIDE SEQUENCE [LARGE SCALE GENOMIC DNA]</scope>
    <source>
        <strain>DSM 101675 / C91 / Nm57</strain>
    </source>
</reference>
<proteinExistence type="inferred from homology"/>